<name>YBEY_LYSSC</name>
<dbReference type="EC" id="3.1.-.-" evidence="1"/>
<dbReference type="EMBL" id="CP000817">
    <property type="protein sequence ID" value="ACA41198.1"/>
    <property type="molecule type" value="Genomic_DNA"/>
</dbReference>
<dbReference type="RefSeq" id="WP_012295252.1">
    <property type="nucleotide sequence ID" value="NC_010382.1"/>
</dbReference>
<dbReference type="SMR" id="B1HTJ4"/>
<dbReference type="EnsemblBacteria" id="ACA41198">
    <property type="protein sequence ID" value="ACA41198"/>
    <property type="gene ID" value="Bsph_3714"/>
</dbReference>
<dbReference type="KEGG" id="lsp:Bsph_3714"/>
<dbReference type="HOGENOM" id="CLU_106710_3_0_9"/>
<dbReference type="Proteomes" id="UP000002164">
    <property type="component" value="Chromosome"/>
</dbReference>
<dbReference type="GO" id="GO:0005737">
    <property type="term" value="C:cytoplasm"/>
    <property type="evidence" value="ECO:0007669"/>
    <property type="project" value="UniProtKB-SubCell"/>
</dbReference>
<dbReference type="GO" id="GO:0004222">
    <property type="term" value="F:metalloendopeptidase activity"/>
    <property type="evidence" value="ECO:0007669"/>
    <property type="project" value="InterPro"/>
</dbReference>
<dbReference type="GO" id="GO:0004521">
    <property type="term" value="F:RNA endonuclease activity"/>
    <property type="evidence" value="ECO:0007669"/>
    <property type="project" value="UniProtKB-UniRule"/>
</dbReference>
<dbReference type="GO" id="GO:0008270">
    <property type="term" value="F:zinc ion binding"/>
    <property type="evidence" value="ECO:0007669"/>
    <property type="project" value="UniProtKB-UniRule"/>
</dbReference>
<dbReference type="GO" id="GO:0006364">
    <property type="term" value="P:rRNA processing"/>
    <property type="evidence" value="ECO:0007669"/>
    <property type="project" value="UniProtKB-UniRule"/>
</dbReference>
<dbReference type="Gene3D" id="3.40.390.30">
    <property type="entry name" value="Metalloproteases ('zincins'), catalytic domain"/>
    <property type="match status" value="1"/>
</dbReference>
<dbReference type="HAMAP" id="MF_00009">
    <property type="entry name" value="Endoribonucl_YbeY"/>
    <property type="match status" value="1"/>
</dbReference>
<dbReference type="InterPro" id="IPR023091">
    <property type="entry name" value="MetalPrtase_cat_dom_sf_prd"/>
</dbReference>
<dbReference type="InterPro" id="IPR002036">
    <property type="entry name" value="YbeY"/>
</dbReference>
<dbReference type="InterPro" id="IPR020549">
    <property type="entry name" value="YbeY_CS"/>
</dbReference>
<dbReference type="NCBIfam" id="TIGR00043">
    <property type="entry name" value="rRNA maturation RNase YbeY"/>
    <property type="match status" value="1"/>
</dbReference>
<dbReference type="PANTHER" id="PTHR46986">
    <property type="entry name" value="ENDORIBONUCLEASE YBEY, CHLOROPLASTIC"/>
    <property type="match status" value="1"/>
</dbReference>
<dbReference type="PANTHER" id="PTHR46986:SF1">
    <property type="entry name" value="ENDORIBONUCLEASE YBEY, CHLOROPLASTIC"/>
    <property type="match status" value="1"/>
</dbReference>
<dbReference type="Pfam" id="PF02130">
    <property type="entry name" value="YbeY"/>
    <property type="match status" value="1"/>
</dbReference>
<dbReference type="SUPFAM" id="SSF55486">
    <property type="entry name" value="Metalloproteases ('zincins'), catalytic domain"/>
    <property type="match status" value="1"/>
</dbReference>
<dbReference type="PROSITE" id="PS01306">
    <property type="entry name" value="UPF0054"/>
    <property type="match status" value="1"/>
</dbReference>
<keyword id="KW-0963">Cytoplasm</keyword>
<keyword id="KW-0255">Endonuclease</keyword>
<keyword id="KW-0378">Hydrolase</keyword>
<keyword id="KW-0479">Metal-binding</keyword>
<keyword id="KW-0540">Nuclease</keyword>
<keyword id="KW-0690">Ribosome biogenesis</keyword>
<keyword id="KW-0698">rRNA processing</keyword>
<keyword id="KW-0862">Zinc</keyword>
<feature type="chain" id="PRO_1000089191" description="Endoribonuclease YbeY">
    <location>
        <begin position="1"/>
        <end position="157"/>
    </location>
</feature>
<feature type="binding site" evidence="1">
    <location>
        <position position="122"/>
    </location>
    <ligand>
        <name>Zn(2+)</name>
        <dbReference type="ChEBI" id="CHEBI:29105"/>
        <note>catalytic</note>
    </ligand>
</feature>
<feature type="binding site" evidence="1">
    <location>
        <position position="126"/>
    </location>
    <ligand>
        <name>Zn(2+)</name>
        <dbReference type="ChEBI" id="CHEBI:29105"/>
        <note>catalytic</note>
    </ligand>
</feature>
<feature type="binding site" evidence="1">
    <location>
        <position position="132"/>
    </location>
    <ligand>
        <name>Zn(2+)</name>
        <dbReference type="ChEBI" id="CHEBI:29105"/>
        <note>catalytic</note>
    </ligand>
</feature>
<reference key="1">
    <citation type="journal article" date="2008" name="J. Bacteriol.">
        <title>Complete genome sequence of the mosquitocidal bacterium Bacillus sphaericus C3-41 and comparison with those of closely related Bacillus species.</title>
        <authorList>
            <person name="Hu X."/>
            <person name="Fan W."/>
            <person name="Han B."/>
            <person name="Liu H."/>
            <person name="Zheng D."/>
            <person name="Li Q."/>
            <person name="Dong W."/>
            <person name="Yan J."/>
            <person name="Gao M."/>
            <person name="Berry C."/>
            <person name="Yuan Z."/>
        </authorList>
    </citation>
    <scope>NUCLEOTIDE SEQUENCE [LARGE SCALE GENOMIC DNA]</scope>
    <source>
        <strain>C3-41</strain>
    </source>
</reference>
<accession>B1HTJ4</accession>
<proteinExistence type="inferred from homology"/>
<evidence type="ECO:0000255" key="1">
    <source>
        <dbReference type="HAMAP-Rule" id="MF_00009"/>
    </source>
</evidence>
<comment type="function">
    <text evidence="1">Single strand-specific metallo-endoribonuclease involved in late-stage 70S ribosome quality control and in maturation of the 3' terminus of the 16S rRNA.</text>
</comment>
<comment type="cofactor">
    <cofactor evidence="1">
        <name>Zn(2+)</name>
        <dbReference type="ChEBI" id="CHEBI:29105"/>
    </cofactor>
    <text evidence="1">Binds 1 zinc ion.</text>
</comment>
<comment type="subcellular location">
    <subcellularLocation>
        <location evidence="1">Cytoplasm</location>
    </subcellularLocation>
</comment>
<comment type="similarity">
    <text evidence="1">Belongs to the endoribonuclease YbeY family.</text>
</comment>
<protein>
    <recommendedName>
        <fullName evidence="1">Endoribonuclease YbeY</fullName>
        <ecNumber evidence="1">3.1.-.-</ecNumber>
    </recommendedName>
</protein>
<organism>
    <name type="scientific">Lysinibacillus sphaericus (strain C3-41)</name>
    <dbReference type="NCBI Taxonomy" id="444177"/>
    <lineage>
        <taxon>Bacteria</taxon>
        <taxon>Bacillati</taxon>
        <taxon>Bacillota</taxon>
        <taxon>Bacilli</taxon>
        <taxon>Bacillales</taxon>
        <taxon>Bacillaceae</taxon>
        <taxon>Lysinibacillus</taxon>
    </lineage>
</organism>
<sequence>MILTIDFTDETNEVAAQHTELVEKLLQHAASVESIEPETEVSVTFVTNDTIQDINREYRGKDQPTDVISFALEELGEGEMAVTFEGMPRVLGDIIISTDRAKEQAEEYNHSFERELGFLAVHGFLHLLGYDHMEPEEEKVMFTKQDEILQTFGLGRD</sequence>
<gene>
    <name evidence="1" type="primary">ybeY</name>
    <name type="ordered locus">Bsph_3714</name>
</gene>